<gene>
    <name type="primary">yvrO</name>
    <name type="ordered locus">BSU33270</name>
</gene>
<protein>
    <recommendedName>
        <fullName>Uncharacterized ABC transporter ATP-binding protein YvrO</fullName>
        <ecNumber>7.-.-.-</ecNumber>
    </recommendedName>
</protein>
<accession>O34979</accession>
<accession>O52857</accession>
<evidence type="ECO:0000255" key="1">
    <source>
        <dbReference type="PROSITE-ProRule" id="PRU00434"/>
    </source>
</evidence>
<evidence type="ECO:0000305" key="2"/>
<comment type="similarity">
    <text evidence="2">Belongs to the ABC transporter superfamily.</text>
</comment>
<sequence>MLTLNNISKSYKLGKEEVPILKHINLTVQAGEFLAIMGPSGSGKSTLMNIIGCLDRPTSGTYTLDQIDILKGKDGALAEIRNESIGFVFQTFHLLPRLTALQNVELPMIYNKVKKKERRQRAYEALEKVGLKDRVSYKPPKLSGGQKQRVAIARALVNQPRFILADEPTGALDTKSSEQILALFSELHREGKTIIMITHDPDVAKKADRTVFIRDGELVLDERGDISHA</sequence>
<proteinExistence type="inferred from homology"/>
<keyword id="KW-0067">ATP-binding</keyword>
<keyword id="KW-0547">Nucleotide-binding</keyword>
<keyword id="KW-1185">Reference proteome</keyword>
<keyword id="KW-1278">Translocase</keyword>
<keyword id="KW-0813">Transport</keyword>
<organism>
    <name type="scientific">Bacillus subtilis (strain 168)</name>
    <dbReference type="NCBI Taxonomy" id="224308"/>
    <lineage>
        <taxon>Bacteria</taxon>
        <taxon>Bacillati</taxon>
        <taxon>Bacillota</taxon>
        <taxon>Bacilli</taxon>
        <taxon>Bacillales</taxon>
        <taxon>Bacillaceae</taxon>
        <taxon>Bacillus</taxon>
    </lineage>
</organism>
<name>YVRO_BACSU</name>
<dbReference type="EC" id="7.-.-.-"/>
<dbReference type="EMBL" id="AJ223978">
    <property type="protein sequence ID" value="CAA11724.1"/>
    <property type="molecule type" value="Genomic_DNA"/>
</dbReference>
<dbReference type="EMBL" id="AL009126">
    <property type="protein sequence ID" value="CAB15318.2"/>
    <property type="molecule type" value="Genomic_DNA"/>
</dbReference>
<dbReference type="PIR" id="A70048">
    <property type="entry name" value="A70048"/>
</dbReference>
<dbReference type="RefSeq" id="NP_391208.2">
    <property type="nucleotide sequence ID" value="NC_000964.3"/>
</dbReference>
<dbReference type="RefSeq" id="WP_003242701.1">
    <property type="nucleotide sequence ID" value="NZ_OZ025638.1"/>
</dbReference>
<dbReference type="SMR" id="O34979"/>
<dbReference type="FunCoup" id="O34979">
    <property type="interactions" value="549"/>
</dbReference>
<dbReference type="STRING" id="224308.BSU33270"/>
<dbReference type="PaxDb" id="224308-BSU33270"/>
<dbReference type="EnsemblBacteria" id="CAB15318">
    <property type="protein sequence ID" value="CAB15318"/>
    <property type="gene ID" value="BSU_33270"/>
</dbReference>
<dbReference type="GeneID" id="938472"/>
<dbReference type="KEGG" id="bsu:BSU33270"/>
<dbReference type="PATRIC" id="fig|224308.179.peg.3611"/>
<dbReference type="eggNOG" id="COG1136">
    <property type="taxonomic scope" value="Bacteria"/>
</dbReference>
<dbReference type="InParanoid" id="O34979"/>
<dbReference type="OrthoDB" id="9791546at2"/>
<dbReference type="PhylomeDB" id="O34979"/>
<dbReference type="BioCyc" id="BSUB:BSU33270-MONOMER"/>
<dbReference type="Proteomes" id="UP000001570">
    <property type="component" value="Chromosome"/>
</dbReference>
<dbReference type="GO" id="GO:0005886">
    <property type="term" value="C:plasma membrane"/>
    <property type="evidence" value="ECO:0000318"/>
    <property type="project" value="GO_Central"/>
</dbReference>
<dbReference type="GO" id="GO:0005524">
    <property type="term" value="F:ATP binding"/>
    <property type="evidence" value="ECO:0007669"/>
    <property type="project" value="UniProtKB-KW"/>
</dbReference>
<dbReference type="GO" id="GO:0016887">
    <property type="term" value="F:ATP hydrolysis activity"/>
    <property type="evidence" value="ECO:0007669"/>
    <property type="project" value="InterPro"/>
</dbReference>
<dbReference type="GO" id="GO:0022857">
    <property type="term" value="F:transmembrane transporter activity"/>
    <property type="evidence" value="ECO:0000318"/>
    <property type="project" value="GO_Central"/>
</dbReference>
<dbReference type="GO" id="GO:0055085">
    <property type="term" value="P:transmembrane transport"/>
    <property type="evidence" value="ECO:0000318"/>
    <property type="project" value="GO_Central"/>
</dbReference>
<dbReference type="CDD" id="cd03255">
    <property type="entry name" value="ABC_MJ0796_LolCDE_FtsE"/>
    <property type="match status" value="1"/>
</dbReference>
<dbReference type="FunFam" id="3.40.50.300:FF:000032">
    <property type="entry name" value="Export ABC transporter ATP-binding protein"/>
    <property type="match status" value="1"/>
</dbReference>
<dbReference type="Gene3D" id="3.40.50.300">
    <property type="entry name" value="P-loop containing nucleotide triphosphate hydrolases"/>
    <property type="match status" value="1"/>
</dbReference>
<dbReference type="InterPro" id="IPR003593">
    <property type="entry name" value="AAA+_ATPase"/>
</dbReference>
<dbReference type="InterPro" id="IPR003439">
    <property type="entry name" value="ABC_transporter-like_ATP-bd"/>
</dbReference>
<dbReference type="InterPro" id="IPR017871">
    <property type="entry name" value="ABC_transporter-like_CS"/>
</dbReference>
<dbReference type="InterPro" id="IPR015854">
    <property type="entry name" value="ABC_transpr_LolD-like"/>
</dbReference>
<dbReference type="InterPro" id="IPR017911">
    <property type="entry name" value="MacB-like_ATP-bd"/>
</dbReference>
<dbReference type="InterPro" id="IPR027417">
    <property type="entry name" value="P-loop_NTPase"/>
</dbReference>
<dbReference type="PANTHER" id="PTHR24220:SF692">
    <property type="entry name" value="ABC TRANSPORTER DOMAIN-CONTAINING PROTEIN"/>
    <property type="match status" value="1"/>
</dbReference>
<dbReference type="PANTHER" id="PTHR24220">
    <property type="entry name" value="IMPORT ATP-BINDING PROTEIN"/>
    <property type="match status" value="1"/>
</dbReference>
<dbReference type="Pfam" id="PF00005">
    <property type="entry name" value="ABC_tran"/>
    <property type="match status" value="1"/>
</dbReference>
<dbReference type="SMART" id="SM00382">
    <property type="entry name" value="AAA"/>
    <property type="match status" value="1"/>
</dbReference>
<dbReference type="SUPFAM" id="SSF52540">
    <property type="entry name" value="P-loop containing nucleoside triphosphate hydrolases"/>
    <property type="match status" value="1"/>
</dbReference>
<dbReference type="PROSITE" id="PS00211">
    <property type="entry name" value="ABC_TRANSPORTER_1"/>
    <property type="match status" value="1"/>
</dbReference>
<dbReference type="PROSITE" id="PS50893">
    <property type="entry name" value="ABC_TRANSPORTER_2"/>
    <property type="match status" value="1"/>
</dbReference>
<feature type="chain" id="PRO_0000375899" description="Uncharacterized ABC transporter ATP-binding protein YvrO">
    <location>
        <begin position="1"/>
        <end position="229"/>
    </location>
</feature>
<feature type="domain" description="ABC transporter" evidence="1">
    <location>
        <begin position="2"/>
        <end position="229"/>
    </location>
</feature>
<feature type="binding site" evidence="1">
    <location>
        <begin position="38"/>
        <end position="45"/>
    </location>
    <ligand>
        <name>ATP</name>
        <dbReference type="ChEBI" id="CHEBI:30616"/>
    </ligand>
</feature>
<reference key="1">
    <citation type="journal article" date="1998" name="Microbiology">
        <title>The yvsA-yvqA (293 degrees - 289 degrees) region of the Bacillus subtilis chromosome containing genes involved in metal ion uptake and a putative sigma factor.</title>
        <authorList>
            <person name="Wipat A."/>
            <person name="Brignell C.S."/>
            <person name="Guy J.B."/>
            <person name="Rose M."/>
            <person name="Emmerson P.T."/>
            <person name="Harwood C.R."/>
        </authorList>
    </citation>
    <scope>NUCLEOTIDE SEQUENCE [GENOMIC DNA]</scope>
    <source>
        <strain>168</strain>
    </source>
</reference>
<reference key="2">
    <citation type="journal article" date="1997" name="Nature">
        <title>The complete genome sequence of the Gram-positive bacterium Bacillus subtilis.</title>
        <authorList>
            <person name="Kunst F."/>
            <person name="Ogasawara N."/>
            <person name="Moszer I."/>
            <person name="Albertini A.M."/>
            <person name="Alloni G."/>
            <person name="Azevedo V."/>
            <person name="Bertero M.G."/>
            <person name="Bessieres P."/>
            <person name="Bolotin A."/>
            <person name="Borchert S."/>
            <person name="Borriss R."/>
            <person name="Boursier L."/>
            <person name="Brans A."/>
            <person name="Braun M."/>
            <person name="Brignell S.C."/>
            <person name="Bron S."/>
            <person name="Brouillet S."/>
            <person name="Bruschi C.V."/>
            <person name="Caldwell B."/>
            <person name="Capuano V."/>
            <person name="Carter N.M."/>
            <person name="Choi S.-K."/>
            <person name="Codani J.-J."/>
            <person name="Connerton I.F."/>
            <person name="Cummings N.J."/>
            <person name="Daniel R.A."/>
            <person name="Denizot F."/>
            <person name="Devine K.M."/>
            <person name="Duesterhoeft A."/>
            <person name="Ehrlich S.D."/>
            <person name="Emmerson P.T."/>
            <person name="Entian K.-D."/>
            <person name="Errington J."/>
            <person name="Fabret C."/>
            <person name="Ferrari E."/>
            <person name="Foulger D."/>
            <person name="Fritz C."/>
            <person name="Fujita M."/>
            <person name="Fujita Y."/>
            <person name="Fuma S."/>
            <person name="Galizzi A."/>
            <person name="Galleron N."/>
            <person name="Ghim S.-Y."/>
            <person name="Glaser P."/>
            <person name="Goffeau A."/>
            <person name="Golightly E.J."/>
            <person name="Grandi G."/>
            <person name="Guiseppi G."/>
            <person name="Guy B.J."/>
            <person name="Haga K."/>
            <person name="Haiech J."/>
            <person name="Harwood C.R."/>
            <person name="Henaut A."/>
            <person name="Hilbert H."/>
            <person name="Holsappel S."/>
            <person name="Hosono S."/>
            <person name="Hullo M.-F."/>
            <person name="Itaya M."/>
            <person name="Jones L.-M."/>
            <person name="Joris B."/>
            <person name="Karamata D."/>
            <person name="Kasahara Y."/>
            <person name="Klaerr-Blanchard M."/>
            <person name="Klein C."/>
            <person name="Kobayashi Y."/>
            <person name="Koetter P."/>
            <person name="Koningstein G."/>
            <person name="Krogh S."/>
            <person name="Kumano M."/>
            <person name="Kurita K."/>
            <person name="Lapidus A."/>
            <person name="Lardinois S."/>
            <person name="Lauber J."/>
            <person name="Lazarevic V."/>
            <person name="Lee S.-M."/>
            <person name="Levine A."/>
            <person name="Liu H."/>
            <person name="Masuda S."/>
            <person name="Mauel C."/>
            <person name="Medigue C."/>
            <person name="Medina N."/>
            <person name="Mellado R.P."/>
            <person name="Mizuno M."/>
            <person name="Moestl D."/>
            <person name="Nakai S."/>
            <person name="Noback M."/>
            <person name="Noone D."/>
            <person name="O'Reilly M."/>
            <person name="Ogawa K."/>
            <person name="Ogiwara A."/>
            <person name="Oudega B."/>
            <person name="Park S.-H."/>
            <person name="Parro V."/>
            <person name="Pohl T.M."/>
            <person name="Portetelle D."/>
            <person name="Porwollik S."/>
            <person name="Prescott A.M."/>
            <person name="Presecan E."/>
            <person name="Pujic P."/>
            <person name="Purnelle B."/>
            <person name="Rapoport G."/>
            <person name="Rey M."/>
            <person name="Reynolds S."/>
            <person name="Rieger M."/>
            <person name="Rivolta C."/>
            <person name="Rocha E."/>
            <person name="Roche B."/>
            <person name="Rose M."/>
            <person name="Sadaie Y."/>
            <person name="Sato T."/>
            <person name="Scanlan E."/>
            <person name="Schleich S."/>
            <person name="Schroeter R."/>
            <person name="Scoffone F."/>
            <person name="Sekiguchi J."/>
            <person name="Sekowska A."/>
            <person name="Seror S.J."/>
            <person name="Serror P."/>
            <person name="Shin B.-S."/>
            <person name="Soldo B."/>
            <person name="Sorokin A."/>
            <person name="Tacconi E."/>
            <person name="Takagi T."/>
            <person name="Takahashi H."/>
            <person name="Takemaru K."/>
            <person name="Takeuchi M."/>
            <person name="Tamakoshi A."/>
            <person name="Tanaka T."/>
            <person name="Terpstra P."/>
            <person name="Tognoni A."/>
            <person name="Tosato V."/>
            <person name="Uchiyama S."/>
            <person name="Vandenbol M."/>
            <person name="Vannier F."/>
            <person name="Vassarotti A."/>
            <person name="Viari A."/>
            <person name="Wambutt R."/>
            <person name="Wedler E."/>
            <person name="Wedler H."/>
            <person name="Weitzenegger T."/>
            <person name="Winters P."/>
            <person name="Wipat A."/>
            <person name="Yamamoto H."/>
            <person name="Yamane K."/>
            <person name="Yasumoto K."/>
            <person name="Yata K."/>
            <person name="Yoshida K."/>
            <person name="Yoshikawa H.-F."/>
            <person name="Zumstein E."/>
            <person name="Yoshikawa H."/>
            <person name="Danchin A."/>
        </authorList>
    </citation>
    <scope>NUCLEOTIDE SEQUENCE [LARGE SCALE GENOMIC DNA]</scope>
    <source>
        <strain>168</strain>
    </source>
</reference>